<gene>
    <name evidence="1" type="primary">rplS</name>
    <name type="ordered locus">Swoo_1257</name>
</gene>
<reference key="1">
    <citation type="submission" date="2008-02" db="EMBL/GenBank/DDBJ databases">
        <title>Complete sequence of Shewanella woodyi ATCC 51908.</title>
        <authorList>
            <consortium name="US DOE Joint Genome Institute"/>
            <person name="Copeland A."/>
            <person name="Lucas S."/>
            <person name="Lapidus A."/>
            <person name="Glavina del Rio T."/>
            <person name="Dalin E."/>
            <person name="Tice H."/>
            <person name="Bruce D."/>
            <person name="Goodwin L."/>
            <person name="Pitluck S."/>
            <person name="Sims D."/>
            <person name="Brettin T."/>
            <person name="Detter J.C."/>
            <person name="Han C."/>
            <person name="Kuske C.R."/>
            <person name="Schmutz J."/>
            <person name="Larimer F."/>
            <person name="Land M."/>
            <person name="Hauser L."/>
            <person name="Kyrpides N."/>
            <person name="Lykidis A."/>
            <person name="Zhao J.-S."/>
            <person name="Richardson P."/>
        </authorList>
    </citation>
    <scope>NUCLEOTIDE SEQUENCE [LARGE SCALE GENOMIC DNA]</scope>
    <source>
        <strain>ATCC 51908 / MS32</strain>
    </source>
</reference>
<sequence length="117" mass="13337">MNNIIKMLNEEQMKKDVPEFGAGDTVVVKVRVVEGGKERLQAFEGVVIAKRNRGVHSAFTVRKISNGEGVERAFQTHSPIISDIEVKRRGRVRRAKLYYLRERSGKSARIREKLSTK</sequence>
<accession>B1KI71</accession>
<proteinExistence type="inferred from homology"/>
<name>RL19_SHEWM</name>
<comment type="function">
    <text evidence="1">This protein is located at the 30S-50S ribosomal subunit interface and may play a role in the structure and function of the aminoacyl-tRNA binding site.</text>
</comment>
<comment type="similarity">
    <text evidence="1">Belongs to the bacterial ribosomal protein bL19 family.</text>
</comment>
<protein>
    <recommendedName>
        <fullName evidence="1">Large ribosomal subunit protein bL19</fullName>
    </recommendedName>
    <alternativeName>
        <fullName evidence="2">50S ribosomal protein L19</fullName>
    </alternativeName>
</protein>
<dbReference type="EMBL" id="CP000961">
    <property type="protein sequence ID" value="ACA85549.1"/>
    <property type="molecule type" value="Genomic_DNA"/>
</dbReference>
<dbReference type="RefSeq" id="WP_012323895.1">
    <property type="nucleotide sequence ID" value="NC_010506.1"/>
</dbReference>
<dbReference type="SMR" id="B1KI71"/>
<dbReference type="STRING" id="392500.Swoo_1257"/>
<dbReference type="KEGG" id="swd:Swoo_1257"/>
<dbReference type="eggNOG" id="COG0335">
    <property type="taxonomic scope" value="Bacteria"/>
</dbReference>
<dbReference type="HOGENOM" id="CLU_103507_2_2_6"/>
<dbReference type="Proteomes" id="UP000002168">
    <property type="component" value="Chromosome"/>
</dbReference>
<dbReference type="GO" id="GO:0022625">
    <property type="term" value="C:cytosolic large ribosomal subunit"/>
    <property type="evidence" value="ECO:0007669"/>
    <property type="project" value="TreeGrafter"/>
</dbReference>
<dbReference type="GO" id="GO:0003735">
    <property type="term" value="F:structural constituent of ribosome"/>
    <property type="evidence" value="ECO:0007669"/>
    <property type="project" value="InterPro"/>
</dbReference>
<dbReference type="GO" id="GO:0006412">
    <property type="term" value="P:translation"/>
    <property type="evidence" value="ECO:0007669"/>
    <property type="project" value="UniProtKB-UniRule"/>
</dbReference>
<dbReference type="FunFam" id="2.30.30.790:FF:000001">
    <property type="entry name" value="50S ribosomal protein L19"/>
    <property type="match status" value="1"/>
</dbReference>
<dbReference type="Gene3D" id="2.30.30.790">
    <property type="match status" value="1"/>
</dbReference>
<dbReference type="HAMAP" id="MF_00402">
    <property type="entry name" value="Ribosomal_bL19"/>
    <property type="match status" value="1"/>
</dbReference>
<dbReference type="InterPro" id="IPR001857">
    <property type="entry name" value="Ribosomal_bL19"/>
</dbReference>
<dbReference type="InterPro" id="IPR018257">
    <property type="entry name" value="Ribosomal_bL19_CS"/>
</dbReference>
<dbReference type="InterPro" id="IPR038657">
    <property type="entry name" value="Ribosomal_bL19_sf"/>
</dbReference>
<dbReference type="InterPro" id="IPR008991">
    <property type="entry name" value="Translation_prot_SH3-like_sf"/>
</dbReference>
<dbReference type="NCBIfam" id="TIGR01024">
    <property type="entry name" value="rplS_bact"/>
    <property type="match status" value="1"/>
</dbReference>
<dbReference type="PANTHER" id="PTHR15680:SF9">
    <property type="entry name" value="LARGE RIBOSOMAL SUBUNIT PROTEIN BL19M"/>
    <property type="match status" value="1"/>
</dbReference>
<dbReference type="PANTHER" id="PTHR15680">
    <property type="entry name" value="RIBOSOMAL PROTEIN L19"/>
    <property type="match status" value="1"/>
</dbReference>
<dbReference type="Pfam" id="PF01245">
    <property type="entry name" value="Ribosomal_L19"/>
    <property type="match status" value="1"/>
</dbReference>
<dbReference type="PIRSF" id="PIRSF002191">
    <property type="entry name" value="Ribosomal_L19"/>
    <property type="match status" value="1"/>
</dbReference>
<dbReference type="PRINTS" id="PR00061">
    <property type="entry name" value="RIBOSOMALL19"/>
</dbReference>
<dbReference type="SUPFAM" id="SSF50104">
    <property type="entry name" value="Translation proteins SH3-like domain"/>
    <property type="match status" value="1"/>
</dbReference>
<dbReference type="PROSITE" id="PS01015">
    <property type="entry name" value="RIBOSOMAL_L19"/>
    <property type="match status" value="1"/>
</dbReference>
<feature type="chain" id="PRO_1000193886" description="Large ribosomal subunit protein bL19">
    <location>
        <begin position="1"/>
        <end position="117"/>
    </location>
</feature>
<keyword id="KW-1185">Reference proteome</keyword>
<keyword id="KW-0687">Ribonucleoprotein</keyword>
<keyword id="KW-0689">Ribosomal protein</keyword>
<organism>
    <name type="scientific">Shewanella woodyi (strain ATCC 51908 / MS32)</name>
    <dbReference type="NCBI Taxonomy" id="392500"/>
    <lineage>
        <taxon>Bacteria</taxon>
        <taxon>Pseudomonadati</taxon>
        <taxon>Pseudomonadota</taxon>
        <taxon>Gammaproteobacteria</taxon>
        <taxon>Alteromonadales</taxon>
        <taxon>Shewanellaceae</taxon>
        <taxon>Shewanella</taxon>
    </lineage>
</organism>
<evidence type="ECO:0000255" key="1">
    <source>
        <dbReference type="HAMAP-Rule" id="MF_00402"/>
    </source>
</evidence>
<evidence type="ECO:0000305" key="2"/>